<dbReference type="EC" id="2.1.1.181" evidence="1"/>
<dbReference type="EMBL" id="CP000789">
    <property type="protein sequence ID" value="ABU71110.1"/>
    <property type="molecule type" value="Genomic_DNA"/>
</dbReference>
<dbReference type="RefSeq" id="WP_012127863.1">
    <property type="nucleotide sequence ID" value="NC_009783.1"/>
</dbReference>
<dbReference type="SMR" id="A7N060"/>
<dbReference type="KEGG" id="vha:VIBHAR_02145"/>
<dbReference type="PATRIC" id="fig|338187.36.peg.2072"/>
<dbReference type="Proteomes" id="UP000008152">
    <property type="component" value="Chromosome I"/>
</dbReference>
<dbReference type="GO" id="GO:0005737">
    <property type="term" value="C:cytoplasm"/>
    <property type="evidence" value="ECO:0007669"/>
    <property type="project" value="UniProtKB-SubCell"/>
</dbReference>
<dbReference type="GO" id="GO:0052907">
    <property type="term" value="F:23S rRNA (adenine(1618)-N(6))-methyltransferase activity"/>
    <property type="evidence" value="ECO:0007669"/>
    <property type="project" value="UniProtKB-EC"/>
</dbReference>
<dbReference type="GO" id="GO:0070475">
    <property type="term" value="P:rRNA base methylation"/>
    <property type="evidence" value="ECO:0007669"/>
    <property type="project" value="TreeGrafter"/>
</dbReference>
<dbReference type="CDD" id="cd02440">
    <property type="entry name" value="AdoMet_MTases"/>
    <property type="match status" value="1"/>
</dbReference>
<dbReference type="Gene3D" id="3.40.50.150">
    <property type="entry name" value="Vaccinia Virus protein VP39"/>
    <property type="match status" value="1"/>
</dbReference>
<dbReference type="HAMAP" id="MF_01848">
    <property type="entry name" value="23SrRNA_methyltr_F"/>
    <property type="match status" value="1"/>
</dbReference>
<dbReference type="InterPro" id="IPR010286">
    <property type="entry name" value="METTL16/RlmF"/>
</dbReference>
<dbReference type="InterPro" id="IPR016909">
    <property type="entry name" value="rRNA_lsu_MeTfrase_F"/>
</dbReference>
<dbReference type="InterPro" id="IPR029063">
    <property type="entry name" value="SAM-dependent_MTases_sf"/>
</dbReference>
<dbReference type="NCBIfam" id="NF008725">
    <property type="entry name" value="PRK11727.1"/>
    <property type="match status" value="1"/>
</dbReference>
<dbReference type="PANTHER" id="PTHR13393:SF0">
    <property type="entry name" value="RNA N6-ADENOSINE-METHYLTRANSFERASE METTL16"/>
    <property type="match status" value="1"/>
</dbReference>
<dbReference type="PANTHER" id="PTHR13393">
    <property type="entry name" value="SAM-DEPENDENT METHYLTRANSFERASE"/>
    <property type="match status" value="1"/>
</dbReference>
<dbReference type="Pfam" id="PF05971">
    <property type="entry name" value="Methyltransf_10"/>
    <property type="match status" value="1"/>
</dbReference>
<dbReference type="PIRSF" id="PIRSF029038">
    <property type="entry name" value="Mtase_YbiN_prd"/>
    <property type="match status" value="1"/>
</dbReference>
<dbReference type="SUPFAM" id="SSF53335">
    <property type="entry name" value="S-adenosyl-L-methionine-dependent methyltransferases"/>
    <property type="match status" value="1"/>
</dbReference>
<comment type="function">
    <text evidence="1">Specifically methylates the adenine in position 1618 of 23S rRNA.</text>
</comment>
<comment type="catalytic activity">
    <reaction evidence="1">
        <text>adenosine(1618) in 23S rRNA + S-adenosyl-L-methionine = N(6)-methyladenosine(1618) in 23S rRNA + S-adenosyl-L-homocysteine + H(+)</text>
        <dbReference type="Rhea" id="RHEA:16497"/>
        <dbReference type="Rhea" id="RHEA-COMP:10229"/>
        <dbReference type="Rhea" id="RHEA-COMP:10231"/>
        <dbReference type="ChEBI" id="CHEBI:15378"/>
        <dbReference type="ChEBI" id="CHEBI:57856"/>
        <dbReference type="ChEBI" id="CHEBI:59789"/>
        <dbReference type="ChEBI" id="CHEBI:74411"/>
        <dbReference type="ChEBI" id="CHEBI:74449"/>
        <dbReference type="EC" id="2.1.1.181"/>
    </reaction>
</comment>
<comment type="subcellular location">
    <subcellularLocation>
        <location evidence="1">Cytoplasm</location>
    </subcellularLocation>
</comment>
<comment type="similarity">
    <text evidence="1">Belongs to the methyltransferase superfamily. METTL16/RlmF family.</text>
</comment>
<reference key="1">
    <citation type="submission" date="2007-08" db="EMBL/GenBank/DDBJ databases">
        <authorList>
            <consortium name="The Vibrio harveyi Genome Sequencing Project"/>
            <person name="Bassler B."/>
            <person name="Clifton S.W."/>
            <person name="Fulton L."/>
            <person name="Delehaunty K."/>
            <person name="Fronick C."/>
            <person name="Harrison M."/>
            <person name="Markivic C."/>
            <person name="Fulton R."/>
            <person name="Tin-Wollam A.-M."/>
            <person name="Shah N."/>
            <person name="Pepin K."/>
            <person name="Nash W."/>
            <person name="Thiruvilangam P."/>
            <person name="Bhonagiri V."/>
            <person name="Waters C."/>
            <person name="Tu K.C."/>
            <person name="Irgon J."/>
            <person name="Wilson R.K."/>
        </authorList>
    </citation>
    <scope>NUCLEOTIDE SEQUENCE [LARGE SCALE GENOMIC DNA]</scope>
    <source>
        <strain>ATCC BAA-1116 / BB120</strain>
    </source>
</reference>
<protein>
    <recommendedName>
        <fullName evidence="1">Ribosomal RNA large subunit methyltransferase F</fullName>
        <ecNumber evidence="1">2.1.1.181</ecNumber>
    </recommendedName>
    <alternativeName>
        <fullName evidence="1">23S rRNA mA1618 methyltransferase</fullName>
    </alternativeName>
    <alternativeName>
        <fullName evidence="1">rRNA adenine N-6-methyltransferase</fullName>
    </alternativeName>
</protein>
<feature type="chain" id="PRO_0000349976" description="Ribosomal RNA large subunit methyltransferase F">
    <location>
        <begin position="1"/>
        <end position="388"/>
    </location>
</feature>
<feature type="region of interest" description="Disordered" evidence="2">
    <location>
        <begin position="1"/>
        <end position="51"/>
    </location>
</feature>
<feature type="compositionally biased region" description="Polar residues" evidence="2">
    <location>
        <begin position="1"/>
        <end position="22"/>
    </location>
</feature>
<feature type="compositionally biased region" description="Basic residues" evidence="2">
    <location>
        <begin position="27"/>
        <end position="36"/>
    </location>
</feature>
<evidence type="ECO:0000255" key="1">
    <source>
        <dbReference type="HAMAP-Rule" id="MF_01848"/>
    </source>
</evidence>
<evidence type="ECO:0000256" key="2">
    <source>
        <dbReference type="SAM" id="MobiDB-lite"/>
    </source>
</evidence>
<name>RLMF_VIBC1</name>
<gene>
    <name evidence="1" type="primary">rlmF</name>
    <name type="ordered locus">VIBHAR_02145</name>
</gene>
<organism>
    <name type="scientific">Vibrio campbellii (strain ATCC BAA-1116)</name>
    <dbReference type="NCBI Taxonomy" id="2902295"/>
    <lineage>
        <taxon>Bacteria</taxon>
        <taxon>Pseudomonadati</taxon>
        <taxon>Pseudomonadota</taxon>
        <taxon>Gammaproteobacteria</taxon>
        <taxon>Vibrionales</taxon>
        <taxon>Vibrionaceae</taxon>
        <taxon>Vibrio</taxon>
    </lineage>
</organism>
<keyword id="KW-0963">Cytoplasm</keyword>
<keyword id="KW-0489">Methyltransferase</keyword>
<keyword id="KW-0698">rRNA processing</keyword>
<keyword id="KW-0949">S-adenosyl-L-methionine</keyword>
<keyword id="KW-0808">Transferase</keyword>
<sequence length="388" mass="43524">MKTNNHNAKQAQTKTAKSNPSKEVTKIKPKRVKNKPTAKAAKSTGLKTNAANESSDVEVIKTAKSGLHERNAHRGRYDFKKLIAAEPQLKSFVIKNPKGEDSINFSDPKAVKMLNKALLAAHYDIEYWDIPDTYLCPPIPGRADYVHRVAELLDGEVKGKYAHHKVRALDVGVGANCIYPIVGVTQYGWHYTGSDVDPKSIESARTIVERNVSLNGKIELRQQTSESNIYRGIIQPNDRYDITTCNPPFHRSAEEAAMGSQRKLDNLKANQRKKGVKVQAHQAKTPQVKANKPALNFGGQNAELWCEGGEAAFIRKMANESQAFSAQVLWFTTLISKKDNVRPMRKQLEKLGVKAIRIVEMSQGQKVSRFMAWSYMDKAQRKAWIELK</sequence>
<accession>A7N060</accession>
<proteinExistence type="inferred from homology"/>